<evidence type="ECO:0000255" key="1">
    <source>
        <dbReference type="HAMAP-Rule" id="MF_00802"/>
    </source>
</evidence>
<dbReference type="EC" id="2.7.7.89" evidence="1"/>
<dbReference type="EC" id="2.7.7.42" evidence="1"/>
<dbReference type="EMBL" id="CP000946">
    <property type="protein sequence ID" value="ACA76322.1"/>
    <property type="molecule type" value="Genomic_DNA"/>
</dbReference>
<dbReference type="RefSeq" id="WP_001301081.1">
    <property type="nucleotide sequence ID" value="NZ_MTFT01000027.1"/>
</dbReference>
<dbReference type="SMR" id="B1IRR3"/>
<dbReference type="KEGG" id="ecl:EcolC_0646"/>
<dbReference type="HOGENOM" id="CLU_006233_0_1_6"/>
<dbReference type="GO" id="GO:0005829">
    <property type="term" value="C:cytosol"/>
    <property type="evidence" value="ECO:0007669"/>
    <property type="project" value="TreeGrafter"/>
</dbReference>
<dbReference type="GO" id="GO:0008882">
    <property type="term" value="F:[glutamate-ammonia-ligase] adenylyltransferase activity"/>
    <property type="evidence" value="ECO:0007669"/>
    <property type="project" value="UniProtKB-UniRule"/>
</dbReference>
<dbReference type="GO" id="GO:0047388">
    <property type="term" value="F:[glutamine synthetase]-adenylyl-L-tyrosine phosphorylase activity"/>
    <property type="evidence" value="ECO:0007669"/>
    <property type="project" value="UniProtKB-EC"/>
</dbReference>
<dbReference type="GO" id="GO:0005524">
    <property type="term" value="F:ATP binding"/>
    <property type="evidence" value="ECO:0007669"/>
    <property type="project" value="UniProtKB-UniRule"/>
</dbReference>
<dbReference type="GO" id="GO:0000287">
    <property type="term" value="F:magnesium ion binding"/>
    <property type="evidence" value="ECO:0007669"/>
    <property type="project" value="UniProtKB-UniRule"/>
</dbReference>
<dbReference type="GO" id="GO:0000820">
    <property type="term" value="P:regulation of glutamine family amino acid metabolic process"/>
    <property type="evidence" value="ECO:0007669"/>
    <property type="project" value="UniProtKB-UniRule"/>
</dbReference>
<dbReference type="CDD" id="cd05401">
    <property type="entry name" value="NT_GlnE_GlnD_like"/>
    <property type="match status" value="2"/>
</dbReference>
<dbReference type="FunFam" id="1.10.4050.10:FF:000001">
    <property type="entry name" value="Bifunctional glutamine synthetase adenylyltransferase/adenylyl-removing enzyme"/>
    <property type="match status" value="1"/>
</dbReference>
<dbReference type="FunFam" id="1.20.120.1510:FF:000001">
    <property type="entry name" value="Bifunctional glutamine synthetase adenylyltransferase/adenylyl-removing enzyme"/>
    <property type="match status" value="1"/>
</dbReference>
<dbReference type="FunFam" id="1.20.120.330:FF:000005">
    <property type="entry name" value="Bifunctional glutamine synthetase adenylyltransferase/adenylyl-removing enzyme"/>
    <property type="match status" value="1"/>
</dbReference>
<dbReference type="FunFam" id="1.20.120.330:FF:000008">
    <property type="entry name" value="Bifunctional glutamine synthetase adenylyltransferase/adenylyl-removing enzyme"/>
    <property type="match status" value="1"/>
</dbReference>
<dbReference type="FunFam" id="3.30.460.10:FF:000009">
    <property type="entry name" value="Bifunctional glutamine synthetase adenylyltransferase/adenylyl-removing enzyme"/>
    <property type="match status" value="1"/>
</dbReference>
<dbReference type="FunFam" id="3.30.460.10:FF:000014">
    <property type="entry name" value="Bifunctional glutamine synthetase adenylyltransferase/adenylyl-removing enzyme"/>
    <property type="match status" value="1"/>
</dbReference>
<dbReference type="Gene3D" id="1.20.120.1510">
    <property type="match status" value="1"/>
</dbReference>
<dbReference type="Gene3D" id="3.30.460.10">
    <property type="entry name" value="Beta Polymerase, domain 2"/>
    <property type="match status" value="2"/>
</dbReference>
<dbReference type="Gene3D" id="1.10.4050.10">
    <property type="entry name" value="Glutamine synthase adenylyltransferase GlnE"/>
    <property type="match status" value="1"/>
</dbReference>
<dbReference type="Gene3D" id="1.20.120.330">
    <property type="entry name" value="Nucleotidyltransferases domain 2"/>
    <property type="match status" value="2"/>
</dbReference>
<dbReference type="HAMAP" id="MF_00802">
    <property type="entry name" value="GlnE"/>
    <property type="match status" value="1"/>
</dbReference>
<dbReference type="InterPro" id="IPR023057">
    <property type="entry name" value="GlnE"/>
</dbReference>
<dbReference type="InterPro" id="IPR005190">
    <property type="entry name" value="GlnE_rpt_dom"/>
</dbReference>
<dbReference type="InterPro" id="IPR043519">
    <property type="entry name" value="NT_sf"/>
</dbReference>
<dbReference type="InterPro" id="IPR013546">
    <property type="entry name" value="PII_UdlTrfase/GS_AdlTrfase"/>
</dbReference>
<dbReference type="NCBIfam" id="NF008292">
    <property type="entry name" value="PRK11072.1"/>
    <property type="match status" value="1"/>
</dbReference>
<dbReference type="PANTHER" id="PTHR30621:SF0">
    <property type="entry name" value="BIFUNCTIONAL GLUTAMINE SYNTHETASE ADENYLYLTRANSFERASE_ADENYLYL-REMOVING ENZYME"/>
    <property type="match status" value="1"/>
</dbReference>
<dbReference type="PANTHER" id="PTHR30621">
    <property type="entry name" value="GLUTAMINE SYNTHETASE ADENYLYLTRANSFERASE"/>
    <property type="match status" value="1"/>
</dbReference>
<dbReference type="Pfam" id="PF08335">
    <property type="entry name" value="GlnD_UR_UTase"/>
    <property type="match status" value="2"/>
</dbReference>
<dbReference type="Pfam" id="PF03710">
    <property type="entry name" value="GlnE"/>
    <property type="match status" value="2"/>
</dbReference>
<dbReference type="SUPFAM" id="SSF81301">
    <property type="entry name" value="Nucleotidyltransferase"/>
    <property type="match status" value="2"/>
</dbReference>
<dbReference type="SUPFAM" id="SSF81593">
    <property type="entry name" value="Nucleotidyltransferase substrate binding subunit/domain"/>
    <property type="match status" value="2"/>
</dbReference>
<organism>
    <name type="scientific">Escherichia coli (strain ATCC 8739 / DSM 1576 / NBRC 3972 / NCIMB 8545 / WDCM 00012 / Crooks)</name>
    <dbReference type="NCBI Taxonomy" id="481805"/>
    <lineage>
        <taxon>Bacteria</taxon>
        <taxon>Pseudomonadati</taxon>
        <taxon>Pseudomonadota</taxon>
        <taxon>Gammaproteobacteria</taxon>
        <taxon>Enterobacterales</taxon>
        <taxon>Enterobacteriaceae</taxon>
        <taxon>Escherichia</taxon>
    </lineage>
</organism>
<name>GLNE_ECOLC</name>
<keyword id="KW-0067">ATP-binding</keyword>
<keyword id="KW-0460">Magnesium</keyword>
<keyword id="KW-0511">Multifunctional enzyme</keyword>
<keyword id="KW-0547">Nucleotide-binding</keyword>
<keyword id="KW-0548">Nucleotidyltransferase</keyword>
<keyword id="KW-0808">Transferase</keyword>
<sequence>MKPLSSPLQQYWQTVVERLPEPLAEESLSAQAKSVLTFSDFVQDSVIAHPEWLTELESQPPQADEWQHYAAWLQEALCNVSDEAGLMRELRLFRRRIMVRIAWAQTLALVTEESILQQLSYLAETLIVAARDWLYDACCREWGTPCNAQGEAQPLLILGMGKLGGGELNFSSDIDLIFAWPEHGCTQGGRRELDNAQFFTRMGQRLIKVLDQPTQDGFVYRVDMRLRPFGESGPLVLSFAALEDYYQEQGRDWERYAMVKARIMGDSEGVYANELRAMLRPFVFRRYIDFSVIQSLRNMKGMIAREVRRRGLTDNIKLGAGGIREIEFIVQVFQLIRGGREPSLQSRSLLPTLSAIAELHLLSENDAEQLRVAYLFLRRLENLLQSINDEQTQTLPSDELNRARLAWAMDFADWPQLTGALTAHMTNVRRVFNELIGDDESETQEESLSEQWRELWQDALQEDDTTPVLAHLSEDDRKQVLTLIADFRKELDKRTIGPRGRQVLDHLMPHLLSDVCAREDAAVTLSRITALLVGIVTRTTYLELLSEFPAALKHLISLCAASPMIASQLARYPLLLDELLDPNTLYQPTATDAYRDELRQYLLRVPEDDEEQQLEALRQFKQAQLLRIAAADIAGTLPVMKVSDHLTWLAEAMIDAVVQQAWVQMVARYGKPNHLNEREGRGFAVVGYGKLGGWELGYSSDLDLIFLHDCPMDAMTDGEREIDGRQFYLRLAQRIMHLFSTRTSSGILYEVDARLRPSGAAGMLVTSAEAFADYQKNEAWTWEHQALVRARVVYGDPQLTAHFDAVRREIMTLPREGKTLQTEVREMREKMRAHLGNKHRDRFDIKADEGGITDIEFITQYLVLRYAHEKPKLTRWSDNVRILELLAQNDIMEEQEAMALTRAYTTLRDELHHLALQELPGHVSEDCFTAERELVRASWQKWLVEE</sequence>
<reference key="1">
    <citation type="submission" date="2008-02" db="EMBL/GenBank/DDBJ databases">
        <title>Complete sequence of Escherichia coli C str. ATCC 8739.</title>
        <authorList>
            <person name="Copeland A."/>
            <person name="Lucas S."/>
            <person name="Lapidus A."/>
            <person name="Glavina del Rio T."/>
            <person name="Dalin E."/>
            <person name="Tice H."/>
            <person name="Bruce D."/>
            <person name="Goodwin L."/>
            <person name="Pitluck S."/>
            <person name="Kiss H."/>
            <person name="Brettin T."/>
            <person name="Detter J.C."/>
            <person name="Han C."/>
            <person name="Kuske C.R."/>
            <person name="Schmutz J."/>
            <person name="Larimer F."/>
            <person name="Land M."/>
            <person name="Hauser L."/>
            <person name="Kyrpides N."/>
            <person name="Mikhailova N."/>
            <person name="Ingram L."/>
            <person name="Richardson P."/>
        </authorList>
    </citation>
    <scope>NUCLEOTIDE SEQUENCE [LARGE SCALE GENOMIC DNA]</scope>
    <source>
        <strain>ATCC 8739 / DSM 1576 / NBRC 3972 / NCIMB 8545 / WDCM 00012 / Crooks</strain>
    </source>
</reference>
<protein>
    <recommendedName>
        <fullName evidence="1">Bifunctional glutamine synthetase adenylyltransferase/adenylyl-removing enzyme</fullName>
    </recommendedName>
    <alternativeName>
        <fullName evidence="1">ATP:glutamine synthetase adenylyltransferase</fullName>
    </alternativeName>
    <alternativeName>
        <fullName evidence="1">ATase</fullName>
    </alternativeName>
    <domain>
        <recommendedName>
            <fullName evidence="1">Glutamine synthetase adenylyl-L-tyrosine phosphorylase</fullName>
            <ecNumber evidence="1">2.7.7.89</ecNumber>
        </recommendedName>
        <alternativeName>
            <fullName evidence="1">Adenylyl removase</fullName>
            <shortName evidence="1">AR</shortName>
            <shortName evidence="1">AT-N</shortName>
        </alternativeName>
    </domain>
    <domain>
        <recommendedName>
            <fullName evidence="1">Glutamine synthetase adenylyl transferase</fullName>
            <ecNumber evidence="1">2.7.7.42</ecNumber>
        </recommendedName>
        <alternativeName>
            <fullName evidence="1">Adenylyl transferase</fullName>
            <shortName evidence="1">AT</shortName>
            <shortName evidence="1">AT-C</shortName>
        </alternativeName>
    </domain>
</protein>
<feature type="chain" id="PRO_1000083700" description="Bifunctional glutamine synthetase adenylyltransferase/adenylyl-removing enzyme">
    <location>
        <begin position="1"/>
        <end position="946"/>
    </location>
</feature>
<feature type="region of interest" description="Adenylyl removase" evidence="1">
    <location>
        <begin position="1"/>
        <end position="440"/>
    </location>
</feature>
<feature type="region of interest" description="Adenylyl transferase" evidence="1">
    <location>
        <begin position="449"/>
        <end position="946"/>
    </location>
</feature>
<proteinExistence type="inferred from homology"/>
<gene>
    <name evidence="1" type="primary">glnE</name>
    <name type="ordered locus">EcolC_0646</name>
</gene>
<accession>B1IRR3</accession>
<comment type="function">
    <text evidence="1">Involved in the regulation of glutamine synthetase GlnA, a key enzyme in the process to assimilate ammonia. When cellular nitrogen levels are high, the C-terminal adenylyl transferase (AT) inactivates GlnA by covalent transfer of an adenylyl group from ATP to specific tyrosine residue of GlnA, thus reducing its activity. Conversely, when nitrogen levels are low, the N-terminal adenylyl removase (AR) activates GlnA by removing the adenylyl group by phosphorolysis, increasing its activity. The regulatory region of GlnE binds the signal transduction protein PII (GlnB) which indicates the nitrogen status of the cell.</text>
</comment>
<comment type="catalytic activity">
    <reaction evidence="1">
        <text>[glutamine synthetase]-O(4)-(5'-adenylyl)-L-tyrosine + phosphate = [glutamine synthetase]-L-tyrosine + ADP</text>
        <dbReference type="Rhea" id="RHEA:43716"/>
        <dbReference type="Rhea" id="RHEA-COMP:10660"/>
        <dbReference type="Rhea" id="RHEA-COMP:10661"/>
        <dbReference type="ChEBI" id="CHEBI:43474"/>
        <dbReference type="ChEBI" id="CHEBI:46858"/>
        <dbReference type="ChEBI" id="CHEBI:83624"/>
        <dbReference type="ChEBI" id="CHEBI:456216"/>
        <dbReference type="EC" id="2.7.7.89"/>
    </reaction>
</comment>
<comment type="catalytic activity">
    <reaction evidence="1">
        <text>[glutamine synthetase]-L-tyrosine + ATP = [glutamine synthetase]-O(4)-(5'-adenylyl)-L-tyrosine + diphosphate</text>
        <dbReference type="Rhea" id="RHEA:18589"/>
        <dbReference type="Rhea" id="RHEA-COMP:10660"/>
        <dbReference type="Rhea" id="RHEA-COMP:10661"/>
        <dbReference type="ChEBI" id="CHEBI:30616"/>
        <dbReference type="ChEBI" id="CHEBI:33019"/>
        <dbReference type="ChEBI" id="CHEBI:46858"/>
        <dbReference type="ChEBI" id="CHEBI:83624"/>
        <dbReference type="EC" id="2.7.7.42"/>
    </reaction>
</comment>
<comment type="cofactor">
    <cofactor evidence="1">
        <name>Mg(2+)</name>
        <dbReference type="ChEBI" id="CHEBI:18420"/>
    </cofactor>
</comment>
<comment type="similarity">
    <text evidence="1">Belongs to the GlnE family.</text>
</comment>